<evidence type="ECO:0000255" key="1"/>
<evidence type="ECO:0000256" key="2">
    <source>
        <dbReference type="SAM" id="MobiDB-lite"/>
    </source>
</evidence>
<evidence type="ECO:0000269" key="3">
    <source>
    </source>
</evidence>
<evidence type="ECO:0000305" key="4"/>
<protein>
    <recommendedName>
        <fullName>Urea-proton symporter DUR3</fullName>
        <shortName>OsDUR3</shortName>
    </recommendedName>
    <alternativeName>
        <fullName>High-affinity urea active transporter DUR3</fullName>
    </alternativeName>
</protein>
<sequence length="721" mass="76416">MASGVCPPAELGFGAEYYSVVNGVCSRAGSYFGGRPVLTQAVGYAVVLGFGAFFALFTSFLVWLEKRYVGSQHTSEWFNTAGRSVKTGLIASVIVSQWTWAATILQSSNVAWQYGVSGPFWYASGATIQVLLFGVMAIEIKRKAPNAHTVCEIVRARWGTPAHLVFLTFCLLTNVIVTAMLLLGGSAVVNALTGVNVYAASFLIPLGVVVYTLAGGLKATFLASYIHSVVVHAVLVVFVFLVYTSSSKLGSPRVVYDRLMAVASAARDCSADLSRNGQACGPVAGNFKGSYLTMLSSGGLVFGIINIVGNFGTVFVDNGYWMSAIAARPSSTHKGYLLGGLVWFAVPFSLATSLGLGALALDLPLTAAEAAKGLVPPATATALMGKSGSVLLLTMLFMAVTSAGSAELVAVSSLCTYDIYRTYLNPGASGKQILRVSRAVVLGFGCFMGVLAVVLNVAGVSLGWMYLAMGVIVGSAVIPIALLLLWSKANAVGAMGGAVSGCALGVAVWLTVAKVQYGRVNLDTTGRNAPMLAGNLVSILVGGAVHAACSLLRPQHYDWGTSREMITTVESVHAALDDELKEERLVHAKRWIVRWGLVFTAVIVVAWPALSLPARRYSLGYFTLWAAVAIAWGTVGSVVIILLPVAESWTTITKVCAGMFTNDAVYDRLDDVNLRLRAIMGAMPEAEKRYRQLHETEMHPAGTHPANDDDDDNNNNQMMHS</sequence>
<comment type="function">
    <text evidence="3">High-affinity urea-proton symporter involved in the active transport of urea across the plasma membrane into root cells. May play an important role in urea uptake by plant cells at low external urea concentrations.</text>
</comment>
<comment type="biophysicochemical properties">
    <kinetics>
        <KM evidence="3">10.3 uM for urea (at pH 5.0)</KM>
    </kinetics>
</comment>
<comment type="subcellular location">
    <subcellularLocation>
        <location evidence="3">Cell membrane</location>
        <topology evidence="3">Multi-pass membrane protein</topology>
    </subcellularLocation>
</comment>
<comment type="tissue specificity">
    <text evidence="3">Expressed in roots, leaves and shoots.</text>
</comment>
<comment type="induction">
    <text evidence="3">By nitrogen deficiency in roots.</text>
</comment>
<comment type="disruption phenotype">
    <text evidence="3">No visible phenotype under normal growth conditions, but when grown with urea as the sole source of nitrogen, plants show reduced growth and slight yellowing of shoots.</text>
</comment>
<comment type="similarity">
    <text evidence="4">Belongs to the sodium:solute symporter (SSF) (TC 2.A.21) family.</text>
</comment>
<dbReference type="EMBL" id="AY463691">
    <property type="protein sequence ID" value="AAR27948.1"/>
    <property type="molecule type" value="mRNA"/>
</dbReference>
<dbReference type="EMBL" id="AC018727">
    <property type="protein sequence ID" value="AAG46170.1"/>
    <property type="molecule type" value="Genomic_DNA"/>
</dbReference>
<dbReference type="EMBL" id="DP000086">
    <property type="protein sequence ID" value="AAP55189.1"/>
    <property type="molecule type" value="Genomic_DNA"/>
</dbReference>
<dbReference type="EMBL" id="AP008216">
    <property type="protein sequence ID" value="BAF27350.1"/>
    <property type="molecule type" value="Genomic_DNA"/>
</dbReference>
<dbReference type="EMBL" id="AP014966">
    <property type="protein sequence ID" value="BAT12250.1"/>
    <property type="molecule type" value="Genomic_DNA"/>
</dbReference>
<dbReference type="EMBL" id="CM000147">
    <property type="protein sequence ID" value="EAZ17111.1"/>
    <property type="molecule type" value="Genomic_DNA"/>
</dbReference>
<dbReference type="RefSeq" id="XP_015614910.1">
    <property type="nucleotide sequence ID" value="XM_015759424.1"/>
</dbReference>
<dbReference type="SMR" id="Q7XBS0"/>
<dbReference type="FunCoup" id="Q7XBS0">
    <property type="interactions" value="350"/>
</dbReference>
<dbReference type="STRING" id="39947.Q7XBS0"/>
<dbReference type="TCDB" id="2.A.21.6.3">
    <property type="family name" value="the solute:sodium symporter (sss) family"/>
</dbReference>
<dbReference type="PaxDb" id="39947-Q7XBS0"/>
<dbReference type="EnsemblPlants" id="Os10t0580400-01">
    <property type="protein sequence ID" value="Os10t0580400-01"/>
    <property type="gene ID" value="Os10g0580400"/>
</dbReference>
<dbReference type="Gramene" id="Os10t0580400-01">
    <property type="protein sequence ID" value="Os10t0580400-01"/>
    <property type="gene ID" value="Os10g0580400"/>
</dbReference>
<dbReference type="KEGG" id="dosa:Os10g0580400"/>
<dbReference type="eggNOG" id="KOG2348">
    <property type="taxonomic scope" value="Eukaryota"/>
</dbReference>
<dbReference type="HOGENOM" id="CLU_010778_2_1_1"/>
<dbReference type="InParanoid" id="Q7XBS0"/>
<dbReference type="OMA" id="LGANWLT"/>
<dbReference type="OrthoDB" id="6132759at2759"/>
<dbReference type="SABIO-RK" id="Q7XBS0"/>
<dbReference type="Proteomes" id="UP000000763">
    <property type="component" value="Chromosome 10"/>
</dbReference>
<dbReference type="Proteomes" id="UP000007752">
    <property type="component" value="Chromosome 10"/>
</dbReference>
<dbReference type="Proteomes" id="UP000059680">
    <property type="component" value="Chromosome 10"/>
</dbReference>
<dbReference type="GO" id="GO:0005886">
    <property type="term" value="C:plasma membrane"/>
    <property type="evidence" value="ECO:0000314"/>
    <property type="project" value="UniProtKB"/>
</dbReference>
<dbReference type="GO" id="GO:0015293">
    <property type="term" value="F:symporter activity"/>
    <property type="evidence" value="ECO:0007669"/>
    <property type="project" value="UniProtKB-KW"/>
</dbReference>
<dbReference type="GO" id="GO:0015204">
    <property type="term" value="F:urea transmembrane transporter activity"/>
    <property type="evidence" value="ECO:0000315"/>
    <property type="project" value="UniProtKB"/>
</dbReference>
<dbReference type="GO" id="GO:0071918">
    <property type="term" value="P:urea transmembrane transport"/>
    <property type="evidence" value="ECO:0000315"/>
    <property type="project" value="UniProtKB"/>
</dbReference>
<dbReference type="CDD" id="cd11476">
    <property type="entry name" value="SLC5sbd_DUR3"/>
    <property type="match status" value="1"/>
</dbReference>
<dbReference type="FunFam" id="1.20.1730.10:FF:000006">
    <property type="entry name" value="Urea active transporter"/>
    <property type="match status" value="1"/>
</dbReference>
<dbReference type="Gene3D" id="1.20.1730.10">
    <property type="entry name" value="Sodium/glucose cotransporter"/>
    <property type="match status" value="1"/>
</dbReference>
<dbReference type="InterPro" id="IPR031155">
    <property type="entry name" value="DUR"/>
</dbReference>
<dbReference type="InterPro" id="IPR038377">
    <property type="entry name" value="Na/Glc_symporter_sf"/>
</dbReference>
<dbReference type="InterPro" id="IPR001734">
    <property type="entry name" value="Na/solute_symporter"/>
</dbReference>
<dbReference type="NCBIfam" id="TIGR00813">
    <property type="entry name" value="sss"/>
    <property type="match status" value="1"/>
</dbReference>
<dbReference type="PANTHER" id="PTHR46154">
    <property type="match status" value="1"/>
</dbReference>
<dbReference type="PANTHER" id="PTHR46154:SF4">
    <property type="entry name" value="UREA ACTIVE TRANSPORTER"/>
    <property type="match status" value="1"/>
</dbReference>
<dbReference type="Pfam" id="PF00474">
    <property type="entry name" value="SSF"/>
    <property type="match status" value="1"/>
</dbReference>
<dbReference type="PROSITE" id="PS50283">
    <property type="entry name" value="NA_SOLUT_SYMP_3"/>
    <property type="match status" value="1"/>
</dbReference>
<organism>
    <name type="scientific">Oryza sativa subsp. japonica</name>
    <name type="common">Rice</name>
    <dbReference type="NCBI Taxonomy" id="39947"/>
    <lineage>
        <taxon>Eukaryota</taxon>
        <taxon>Viridiplantae</taxon>
        <taxon>Streptophyta</taxon>
        <taxon>Embryophyta</taxon>
        <taxon>Tracheophyta</taxon>
        <taxon>Spermatophyta</taxon>
        <taxon>Magnoliopsida</taxon>
        <taxon>Liliopsida</taxon>
        <taxon>Poales</taxon>
        <taxon>Poaceae</taxon>
        <taxon>BOP clade</taxon>
        <taxon>Oryzoideae</taxon>
        <taxon>Oryzeae</taxon>
        <taxon>Oryzinae</taxon>
        <taxon>Oryza</taxon>
        <taxon>Oryza sativa</taxon>
    </lineage>
</organism>
<accession>Q7XBS0</accession>
<accession>A0A0N7KSA2</accession>
<accession>Q9FRN4</accession>
<feature type="chain" id="PRO_0000418601" description="Urea-proton symporter DUR3">
    <location>
        <begin position="1"/>
        <end position="721"/>
    </location>
</feature>
<feature type="transmembrane region" description="Helical" evidence="1">
    <location>
        <begin position="44"/>
        <end position="64"/>
    </location>
</feature>
<feature type="transmembrane region" description="Helical" evidence="1">
    <location>
        <begin position="85"/>
        <end position="105"/>
    </location>
</feature>
<feature type="transmembrane region" description="Helical" evidence="1">
    <location>
        <begin position="120"/>
        <end position="140"/>
    </location>
</feature>
<feature type="transmembrane region" description="Helical" evidence="1">
    <location>
        <begin position="164"/>
        <end position="184"/>
    </location>
</feature>
<feature type="transmembrane region" description="Helical" evidence="1">
    <location>
        <begin position="197"/>
        <end position="217"/>
    </location>
</feature>
<feature type="transmembrane region" description="Helical" evidence="1">
    <location>
        <begin position="221"/>
        <end position="241"/>
    </location>
</feature>
<feature type="transmembrane region" description="Helical" evidence="1">
    <location>
        <begin position="296"/>
        <end position="316"/>
    </location>
</feature>
<feature type="transmembrane region" description="Helical" evidence="1">
    <location>
        <begin position="341"/>
        <end position="361"/>
    </location>
</feature>
<feature type="transmembrane region" description="Helical" evidence="1">
    <location>
        <begin position="393"/>
        <end position="413"/>
    </location>
</feature>
<feature type="transmembrane region" description="Helical" evidence="1">
    <location>
        <begin position="440"/>
        <end position="460"/>
    </location>
</feature>
<feature type="transmembrane region" description="Helical" evidence="1">
    <location>
        <begin position="466"/>
        <end position="486"/>
    </location>
</feature>
<feature type="transmembrane region" description="Helical" evidence="1">
    <location>
        <begin position="492"/>
        <end position="512"/>
    </location>
</feature>
<feature type="transmembrane region" description="Helical" evidence="1">
    <location>
        <begin position="532"/>
        <end position="552"/>
    </location>
</feature>
<feature type="transmembrane region" description="Helical" evidence="1">
    <location>
        <begin position="592"/>
        <end position="612"/>
    </location>
</feature>
<feature type="transmembrane region" description="Helical" evidence="1">
    <location>
        <begin position="625"/>
        <end position="645"/>
    </location>
</feature>
<feature type="region of interest" description="Disordered" evidence="2">
    <location>
        <begin position="699"/>
        <end position="721"/>
    </location>
</feature>
<keyword id="KW-1003">Cell membrane</keyword>
<keyword id="KW-0472">Membrane</keyword>
<keyword id="KW-1185">Reference proteome</keyword>
<keyword id="KW-0769">Symport</keyword>
<keyword id="KW-0812">Transmembrane</keyword>
<keyword id="KW-1133">Transmembrane helix</keyword>
<keyword id="KW-0813">Transport</keyword>
<name>DUR3_ORYSJ</name>
<proteinExistence type="evidence at protein level"/>
<gene>
    <name type="primary">DUR3</name>
    <name type="ordered locus">Os10g0580400</name>
    <name type="ordered locus">LOC_Os10g42960</name>
    <name type="ORF">OsJ_32609</name>
    <name type="ORF">OSJNBa0056G17.4</name>
</gene>
<reference key="1">
    <citation type="journal article" date="2003" name="Plant Cell">
        <title>AtDUR3 encodes a new type of high-affinity urea/H+ symporter in Arabidopsis.</title>
        <authorList>
            <person name="Liu L.H."/>
            <person name="Ludewig U."/>
            <person name="Frommer W.B."/>
            <person name="von Wiren N."/>
        </authorList>
    </citation>
    <scope>NUCLEOTIDE SEQUENCE [MRNA]</scope>
</reference>
<reference key="2">
    <citation type="journal article" date="2003" name="Science">
        <title>In-depth view of structure, activity, and evolution of rice chromosome 10.</title>
        <authorList>
            <person name="Yu Y."/>
            <person name="Rambo T."/>
            <person name="Currie J."/>
            <person name="Saski C."/>
            <person name="Kim H.-R."/>
            <person name="Collura K."/>
            <person name="Thompson S."/>
            <person name="Simmons J."/>
            <person name="Yang T.-J."/>
            <person name="Nah G."/>
            <person name="Patel A.J."/>
            <person name="Thurmond S."/>
            <person name="Henry D."/>
            <person name="Oates R."/>
            <person name="Palmer M."/>
            <person name="Pries G."/>
            <person name="Gibson J."/>
            <person name="Anderson H."/>
            <person name="Paradkar M."/>
            <person name="Crane L."/>
            <person name="Dale J."/>
            <person name="Carver M.B."/>
            <person name="Wood T."/>
            <person name="Frisch D."/>
            <person name="Engler F."/>
            <person name="Soderlund C."/>
            <person name="Palmer L.E."/>
            <person name="Teytelman L."/>
            <person name="Nascimento L."/>
            <person name="De la Bastide M."/>
            <person name="Spiegel L."/>
            <person name="Ware D."/>
            <person name="O'Shaughnessy A."/>
            <person name="Dike S."/>
            <person name="Dedhia N."/>
            <person name="Preston R."/>
            <person name="Huang E."/>
            <person name="Ferraro K."/>
            <person name="Kuit K."/>
            <person name="Miller B."/>
            <person name="Zutavern T."/>
            <person name="Katzenberger F."/>
            <person name="Muller S."/>
            <person name="Balija V."/>
            <person name="Martienssen R.A."/>
            <person name="Stein L."/>
            <person name="Minx P."/>
            <person name="Johnson D."/>
            <person name="Cordum H."/>
            <person name="Mardis E."/>
            <person name="Cheng Z."/>
            <person name="Jiang J."/>
            <person name="Wilson R."/>
            <person name="McCombie W.R."/>
            <person name="Wing R.A."/>
            <person name="Yuan Q."/>
            <person name="Ouyang S."/>
            <person name="Liu J."/>
            <person name="Jones K.M."/>
            <person name="Gansberger K."/>
            <person name="Moffat K."/>
            <person name="Hill J."/>
            <person name="Tsitrin T."/>
            <person name="Overton L."/>
            <person name="Bera J."/>
            <person name="Kim M."/>
            <person name="Jin S."/>
            <person name="Tallon L."/>
            <person name="Ciecko A."/>
            <person name="Pai G."/>
            <person name="Van Aken S."/>
            <person name="Utterback T."/>
            <person name="Reidmuller S."/>
            <person name="Bormann J."/>
            <person name="Feldblyum T."/>
            <person name="Hsiao J."/>
            <person name="Zismann V."/>
            <person name="Blunt S."/>
            <person name="de Vazeille A.R."/>
            <person name="Shaffer T."/>
            <person name="Koo H."/>
            <person name="Suh B."/>
            <person name="Yang Q."/>
            <person name="Haas B."/>
            <person name="Peterson J."/>
            <person name="Pertea M."/>
            <person name="Volfovsky N."/>
            <person name="Wortman J."/>
            <person name="White O."/>
            <person name="Salzberg S.L."/>
            <person name="Fraser C.M."/>
            <person name="Buell C.R."/>
            <person name="Messing J."/>
            <person name="Song R."/>
            <person name="Fuks G."/>
            <person name="Llaca V."/>
            <person name="Kovchak S."/>
            <person name="Young S."/>
            <person name="Bowers J.E."/>
            <person name="Paterson A.H."/>
            <person name="Johns M.A."/>
            <person name="Mao L."/>
            <person name="Pan H."/>
            <person name="Dean R.A."/>
        </authorList>
    </citation>
    <scope>NUCLEOTIDE SEQUENCE [LARGE SCALE GENOMIC DNA]</scope>
    <source>
        <strain>cv. Nipponbare</strain>
    </source>
</reference>
<reference key="3">
    <citation type="journal article" date="2005" name="Nature">
        <title>The map-based sequence of the rice genome.</title>
        <authorList>
            <consortium name="International rice genome sequencing project (IRGSP)"/>
        </authorList>
    </citation>
    <scope>NUCLEOTIDE SEQUENCE [LARGE SCALE GENOMIC DNA]</scope>
    <source>
        <strain>cv. Nipponbare</strain>
    </source>
</reference>
<reference key="4">
    <citation type="journal article" date="2008" name="Nucleic Acids Res.">
        <title>The rice annotation project database (RAP-DB): 2008 update.</title>
        <authorList>
            <consortium name="The rice annotation project (RAP)"/>
        </authorList>
    </citation>
    <scope>GENOME REANNOTATION</scope>
    <source>
        <strain>cv. Nipponbare</strain>
    </source>
</reference>
<reference key="5">
    <citation type="journal article" date="2013" name="Rice">
        <title>Improvement of the Oryza sativa Nipponbare reference genome using next generation sequence and optical map data.</title>
        <authorList>
            <person name="Kawahara Y."/>
            <person name="de la Bastide M."/>
            <person name="Hamilton J.P."/>
            <person name="Kanamori H."/>
            <person name="McCombie W.R."/>
            <person name="Ouyang S."/>
            <person name="Schwartz D.C."/>
            <person name="Tanaka T."/>
            <person name="Wu J."/>
            <person name="Zhou S."/>
            <person name="Childs K.L."/>
            <person name="Davidson R.M."/>
            <person name="Lin H."/>
            <person name="Quesada-Ocampo L."/>
            <person name="Vaillancourt B."/>
            <person name="Sakai H."/>
            <person name="Lee S.S."/>
            <person name="Kim J."/>
            <person name="Numa H."/>
            <person name="Itoh T."/>
            <person name="Buell C.R."/>
            <person name="Matsumoto T."/>
        </authorList>
    </citation>
    <scope>GENOME REANNOTATION</scope>
    <source>
        <strain>cv. Nipponbare</strain>
    </source>
</reference>
<reference key="6">
    <citation type="journal article" date="2005" name="PLoS Biol.">
        <title>The genomes of Oryza sativa: a history of duplications.</title>
        <authorList>
            <person name="Yu J."/>
            <person name="Wang J."/>
            <person name="Lin W."/>
            <person name="Li S."/>
            <person name="Li H."/>
            <person name="Zhou J."/>
            <person name="Ni P."/>
            <person name="Dong W."/>
            <person name="Hu S."/>
            <person name="Zeng C."/>
            <person name="Zhang J."/>
            <person name="Zhang Y."/>
            <person name="Li R."/>
            <person name="Xu Z."/>
            <person name="Li S."/>
            <person name="Li X."/>
            <person name="Zheng H."/>
            <person name="Cong L."/>
            <person name="Lin L."/>
            <person name="Yin J."/>
            <person name="Geng J."/>
            <person name="Li G."/>
            <person name="Shi J."/>
            <person name="Liu J."/>
            <person name="Lv H."/>
            <person name="Li J."/>
            <person name="Wang J."/>
            <person name="Deng Y."/>
            <person name="Ran L."/>
            <person name="Shi X."/>
            <person name="Wang X."/>
            <person name="Wu Q."/>
            <person name="Li C."/>
            <person name="Ren X."/>
            <person name="Wang J."/>
            <person name="Wang X."/>
            <person name="Li D."/>
            <person name="Liu D."/>
            <person name="Zhang X."/>
            <person name="Ji Z."/>
            <person name="Zhao W."/>
            <person name="Sun Y."/>
            <person name="Zhang Z."/>
            <person name="Bao J."/>
            <person name="Han Y."/>
            <person name="Dong L."/>
            <person name="Ji J."/>
            <person name="Chen P."/>
            <person name="Wu S."/>
            <person name="Liu J."/>
            <person name="Xiao Y."/>
            <person name="Bu D."/>
            <person name="Tan J."/>
            <person name="Yang L."/>
            <person name="Ye C."/>
            <person name="Zhang J."/>
            <person name="Xu J."/>
            <person name="Zhou Y."/>
            <person name="Yu Y."/>
            <person name="Zhang B."/>
            <person name="Zhuang S."/>
            <person name="Wei H."/>
            <person name="Liu B."/>
            <person name="Lei M."/>
            <person name="Yu H."/>
            <person name="Li Y."/>
            <person name="Xu H."/>
            <person name="Wei S."/>
            <person name="He X."/>
            <person name="Fang L."/>
            <person name="Zhang Z."/>
            <person name="Zhang Y."/>
            <person name="Huang X."/>
            <person name="Su Z."/>
            <person name="Tong W."/>
            <person name="Li J."/>
            <person name="Tong Z."/>
            <person name="Li S."/>
            <person name="Ye J."/>
            <person name="Wang L."/>
            <person name="Fang L."/>
            <person name="Lei T."/>
            <person name="Chen C.-S."/>
            <person name="Chen H.-C."/>
            <person name="Xu Z."/>
            <person name="Li H."/>
            <person name="Huang H."/>
            <person name="Zhang F."/>
            <person name="Xu H."/>
            <person name="Li N."/>
            <person name="Zhao C."/>
            <person name="Li S."/>
            <person name="Dong L."/>
            <person name="Huang Y."/>
            <person name="Li L."/>
            <person name="Xi Y."/>
            <person name="Qi Q."/>
            <person name="Li W."/>
            <person name="Zhang B."/>
            <person name="Hu W."/>
            <person name="Zhang Y."/>
            <person name="Tian X."/>
            <person name="Jiao Y."/>
            <person name="Liang X."/>
            <person name="Jin J."/>
            <person name="Gao L."/>
            <person name="Zheng W."/>
            <person name="Hao B."/>
            <person name="Liu S.-M."/>
            <person name="Wang W."/>
            <person name="Yuan L."/>
            <person name="Cao M."/>
            <person name="McDermott J."/>
            <person name="Samudrala R."/>
            <person name="Wang J."/>
            <person name="Wong G.K.-S."/>
            <person name="Yang H."/>
        </authorList>
    </citation>
    <scope>NUCLEOTIDE SEQUENCE [LARGE SCALE GENOMIC DNA]</scope>
    <source>
        <strain>cv. Nipponbare</strain>
    </source>
</reference>
<reference key="7">
    <citation type="journal article" date="2012" name="New Phytol.">
        <title>Rice DUR3 mediates high-affinity urea transport and plays an effective role in improvement of urea acquisition and utilization when expressed in Arabidopsis.</title>
        <authorList>
            <person name="Wang W.H."/>
            <person name="Koehler B."/>
            <person name="Cao F.Q."/>
            <person name="Liu G.W."/>
            <person name="Gong Y.Y."/>
            <person name="Sheng S."/>
            <person name="Song Q.C."/>
            <person name="Cheng X.Y."/>
            <person name="Garnett T."/>
            <person name="Okamoto M."/>
            <person name="Qin R."/>
            <person name="Mueller-Roeber B."/>
            <person name="Tester M."/>
            <person name="Liu L.H."/>
        </authorList>
    </citation>
    <scope>FUNCTION</scope>
    <scope>BIOPHYSICOCHEMICAL PROPERTIES</scope>
    <scope>SUBCELLULAR LOCATION</scope>
    <scope>TISSUE SPECIFICITY</scope>
    <scope>INDUCTION</scope>
    <scope>DISRUPTION PHENOTYPE</scope>
</reference>